<feature type="chain" id="PRO_0000121171" description="Ras-related protein Rab11E">
    <location>
        <begin position="1"/>
        <end position="218"/>
    </location>
</feature>
<feature type="short sequence motif" description="Effector region" evidence="1">
    <location>
        <begin position="42"/>
        <end position="50"/>
    </location>
</feature>
<feature type="binding site" evidence="1">
    <location>
        <begin position="20"/>
        <end position="27"/>
    </location>
    <ligand>
        <name>GTP</name>
        <dbReference type="ChEBI" id="CHEBI:37565"/>
    </ligand>
</feature>
<feature type="binding site" evidence="1">
    <location>
        <begin position="68"/>
        <end position="72"/>
    </location>
    <ligand>
        <name>GTP</name>
        <dbReference type="ChEBI" id="CHEBI:37565"/>
    </ligand>
</feature>
<feature type="binding site" evidence="1">
    <location>
        <begin position="126"/>
        <end position="129"/>
    </location>
    <ligand>
        <name>GTP</name>
        <dbReference type="ChEBI" id="CHEBI:37565"/>
    </ligand>
</feature>
<feature type="lipid moiety-binding region" description="S-geranylgeranyl cysteine" evidence="1">
    <location>
        <position position="215"/>
    </location>
</feature>
<feature type="lipid moiety-binding region" description="S-geranylgeranyl cysteine" evidence="1">
    <location>
        <position position="216"/>
    </location>
</feature>
<keyword id="KW-1003">Cell membrane</keyword>
<keyword id="KW-0342">GTP-binding</keyword>
<keyword id="KW-0449">Lipoprotein</keyword>
<keyword id="KW-0472">Membrane</keyword>
<keyword id="KW-0547">Nucleotide-binding</keyword>
<keyword id="KW-0636">Prenylation</keyword>
<gene>
    <name type="primary">RAB11E</name>
</gene>
<name>RB11E_LOTJA</name>
<comment type="subcellular location">
    <subcellularLocation>
        <location evidence="2">Cell membrane</location>
        <topology evidence="2">Lipid-anchor</topology>
        <orientation evidence="2">Cytoplasmic side</orientation>
    </subcellularLocation>
</comment>
<comment type="similarity">
    <text evidence="2">Belongs to the small GTPase superfamily. Rab family.</text>
</comment>
<sequence length="218" mass="24294">MAGYKADDEYDYLFKLVLIGDSGVGKSNLLSRFTRNEFNLESKSTIGVEFATKSLNIDGKVIKAQIWDTAGQERYRAITSAYYRGAVGALLVYDVTRSTTFETAGRWLKELRDHTDPNIVVMLIGNKSDLRHLVTVSTEDGKAFAEKESLYFMETSALEATNVENAFSEVLTQIYRIVSKRAVEAGDRPSTSVVPSQGQTINVNEDSSVLNRYRCCSN</sequence>
<organism>
    <name type="scientific">Lotus japonicus</name>
    <name type="common">Lotus corniculatus var. japonicus</name>
    <dbReference type="NCBI Taxonomy" id="34305"/>
    <lineage>
        <taxon>Eukaryota</taxon>
        <taxon>Viridiplantae</taxon>
        <taxon>Streptophyta</taxon>
        <taxon>Embryophyta</taxon>
        <taxon>Tracheophyta</taxon>
        <taxon>Spermatophyta</taxon>
        <taxon>Magnoliopsida</taxon>
        <taxon>eudicotyledons</taxon>
        <taxon>Gunneridae</taxon>
        <taxon>Pentapetalae</taxon>
        <taxon>rosids</taxon>
        <taxon>fabids</taxon>
        <taxon>Fabales</taxon>
        <taxon>Fabaceae</taxon>
        <taxon>Papilionoideae</taxon>
        <taxon>50 kb inversion clade</taxon>
        <taxon>NPAAA clade</taxon>
        <taxon>Hologalegina</taxon>
        <taxon>robinioid clade</taxon>
        <taxon>Loteae</taxon>
        <taxon>Lotus</taxon>
    </lineage>
</organism>
<reference key="1">
    <citation type="journal article" date="1997" name="Plant J.">
        <title>Identification of new protein species among 33 different small GTP-binding proteins encoded by cDNAs from Lotus japonicus, and expression of corresponding mRNAs in developing root nodules.</title>
        <authorList>
            <person name="Borg S."/>
            <person name="Brandstrup B."/>
            <person name="Jensen T.J."/>
            <person name="Poulsen C."/>
        </authorList>
    </citation>
    <scope>NUCLEOTIDE SEQUENCE [MRNA]</scope>
    <source>
        <strain>cv. Gifu / B-129</strain>
        <tissue>Root nodule</tissue>
    </source>
</reference>
<evidence type="ECO:0000250" key="1"/>
<evidence type="ECO:0000305" key="2"/>
<protein>
    <recommendedName>
        <fullName>Ras-related protein Rab11E</fullName>
    </recommendedName>
</protein>
<dbReference type="EMBL" id="Z73953">
    <property type="protein sequence ID" value="CAA98181.1"/>
    <property type="molecule type" value="mRNA"/>
</dbReference>
<dbReference type="SMR" id="Q40195"/>
<dbReference type="GO" id="GO:0005886">
    <property type="term" value="C:plasma membrane"/>
    <property type="evidence" value="ECO:0007669"/>
    <property type="project" value="UniProtKB-SubCell"/>
</dbReference>
<dbReference type="GO" id="GO:0005525">
    <property type="term" value="F:GTP binding"/>
    <property type="evidence" value="ECO:0007669"/>
    <property type="project" value="UniProtKB-KW"/>
</dbReference>
<dbReference type="GO" id="GO:0003924">
    <property type="term" value="F:GTPase activity"/>
    <property type="evidence" value="ECO:0007669"/>
    <property type="project" value="InterPro"/>
</dbReference>
<dbReference type="CDD" id="cd01868">
    <property type="entry name" value="Rab11_like"/>
    <property type="match status" value="1"/>
</dbReference>
<dbReference type="FunFam" id="3.40.50.300:FF:000067">
    <property type="entry name" value="ras-related protein RABA1f"/>
    <property type="match status" value="1"/>
</dbReference>
<dbReference type="Gene3D" id="3.40.50.300">
    <property type="entry name" value="P-loop containing nucleotide triphosphate hydrolases"/>
    <property type="match status" value="1"/>
</dbReference>
<dbReference type="InterPro" id="IPR027417">
    <property type="entry name" value="P-loop_NTPase"/>
</dbReference>
<dbReference type="InterPro" id="IPR050209">
    <property type="entry name" value="Rab_GTPases_membrane_traffic"/>
</dbReference>
<dbReference type="InterPro" id="IPR005225">
    <property type="entry name" value="Small_GTP-bd"/>
</dbReference>
<dbReference type="InterPro" id="IPR001806">
    <property type="entry name" value="Small_GTPase"/>
</dbReference>
<dbReference type="NCBIfam" id="TIGR00231">
    <property type="entry name" value="small_GTP"/>
    <property type="match status" value="1"/>
</dbReference>
<dbReference type="PANTHER" id="PTHR47979">
    <property type="entry name" value="DRAB11-RELATED"/>
    <property type="match status" value="1"/>
</dbReference>
<dbReference type="Pfam" id="PF00071">
    <property type="entry name" value="Ras"/>
    <property type="match status" value="1"/>
</dbReference>
<dbReference type="PRINTS" id="PR00449">
    <property type="entry name" value="RASTRNSFRMNG"/>
</dbReference>
<dbReference type="SMART" id="SM00175">
    <property type="entry name" value="RAB"/>
    <property type="match status" value="1"/>
</dbReference>
<dbReference type="SMART" id="SM00176">
    <property type="entry name" value="RAN"/>
    <property type="match status" value="1"/>
</dbReference>
<dbReference type="SMART" id="SM00173">
    <property type="entry name" value="RAS"/>
    <property type="match status" value="1"/>
</dbReference>
<dbReference type="SMART" id="SM00174">
    <property type="entry name" value="RHO"/>
    <property type="match status" value="1"/>
</dbReference>
<dbReference type="SUPFAM" id="SSF52540">
    <property type="entry name" value="P-loop containing nucleoside triphosphate hydrolases"/>
    <property type="match status" value="1"/>
</dbReference>
<dbReference type="PROSITE" id="PS51419">
    <property type="entry name" value="RAB"/>
    <property type="match status" value="1"/>
</dbReference>
<accession>Q40195</accession>
<proteinExistence type="evidence at transcript level"/>